<comment type="function">
    <text evidence="3">Destroys superoxide anion radicals which are normally produced within the cells and which are toxic to biological systems.</text>
</comment>
<comment type="catalytic activity">
    <reaction evidence="3">
        <text>2 superoxide + 2 H(+) = H2O2 + O2</text>
        <dbReference type="Rhea" id="RHEA:20696"/>
        <dbReference type="ChEBI" id="CHEBI:15378"/>
        <dbReference type="ChEBI" id="CHEBI:15379"/>
        <dbReference type="ChEBI" id="CHEBI:16240"/>
        <dbReference type="ChEBI" id="CHEBI:18421"/>
        <dbReference type="EC" id="1.15.1.1"/>
    </reaction>
</comment>
<comment type="cofactor">
    <cofactor evidence="3">
        <name>Fe cation</name>
        <dbReference type="ChEBI" id="CHEBI:24875"/>
    </cofactor>
    <text evidence="3">Binds 1 Fe cation per subunit.</text>
</comment>
<comment type="subunit">
    <text evidence="1">Homodimer.</text>
</comment>
<comment type="similarity">
    <text evidence="2">Belongs to the iron/manganese superoxide dismutase family.</text>
</comment>
<reference key="1">
    <citation type="journal article" date="2006" name="Biochimie">
        <title>Psychrophilic superoxide dismutase from Pseudoalteromonas haloplanktis: biochemical characterization and identification of a highly reactive cysteine residue.</title>
        <authorList>
            <person name="Castellano I."/>
            <person name="Di Maro A."/>
            <person name="Ruocco M.R."/>
            <person name="Chambery A."/>
            <person name="Parente A."/>
            <person name="Di Martino M.T."/>
            <person name="Parlato G."/>
            <person name="Masullo M."/>
            <person name="De Vendittis E."/>
        </authorList>
    </citation>
    <scope>PROTEIN SEQUENCE</scope>
    <scope>FUNCTION</scope>
    <scope>CATALYTIC ACTIVITY</scope>
    <scope>COFACTOR</scope>
</reference>
<reference evidence="4" key="2">
    <citation type="journal article" date="2005" name="Genome Res.">
        <title>Coping with cold: the genome of the versatile marine Antarctica bacterium Pseudoalteromonas haloplanktis TAC125.</title>
        <authorList>
            <person name="Medigue C."/>
            <person name="Krin E."/>
            <person name="Pascal G."/>
            <person name="Barbe V."/>
            <person name="Bernsel A."/>
            <person name="Bertin P.N."/>
            <person name="Cheung F."/>
            <person name="Cruveiller S."/>
            <person name="D'Amico S."/>
            <person name="Duilio A."/>
            <person name="Fang G."/>
            <person name="Feller G."/>
            <person name="Ho C."/>
            <person name="Mangenot S."/>
            <person name="Marino G."/>
            <person name="Nilsson J."/>
            <person name="Parrilli E."/>
            <person name="Rocha E.P.C."/>
            <person name="Rouy Z."/>
            <person name="Sekowska A."/>
            <person name="Tutino M.L."/>
            <person name="Vallenet D."/>
            <person name="von Heijne G."/>
            <person name="Danchin A."/>
        </authorList>
    </citation>
    <scope>NUCLEOTIDE SEQUENCE [LARGE SCALE GENOMIC DNA]</scope>
    <source>
        <strain>TAC 125</strain>
    </source>
</reference>
<accession>P84612</accession>
<accession>Q3IKP4</accession>
<protein>
    <recommendedName>
        <fullName>Superoxide dismutase [Fe]</fullName>
        <ecNumber>1.15.1.1</ecNumber>
    </recommendedName>
</protein>
<name>SODF_PSET1</name>
<organism>
    <name type="scientific">Pseudoalteromonas translucida (strain TAC 125)</name>
    <dbReference type="NCBI Taxonomy" id="326442"/>
    <lineage>
        <taxon>Bacteria</taxon>
        <taxon>Pseudomonadati</taxon>
        <taxon>Pseudomonadota</taxon>
        <taxon>Gammaproteobacteria</taxon>
        <taxon>Alteromonadales</taxon>
        <taxon>Pseudoalteromonadaceae</taxon>
        <taxon>Pseudoalteromonas</taxon>
    </lineage>
</organism>
<gene>
    <name evidence="5" type="primary">sodB</name>
    <name type="ordered locus">PSHAa1215</name>
</gene>
<evidence type="ECO:0000250" key="1">
    <source>
        <dbReference type="UniProtKB" id="P09157"/>
    </source>
</evidence>
<evidence type="ECO:0000255" key="2"/>
<evidence type="ECO:0000269" key="3">
    <source>
    </source>
</evidence>
<evidence type="ECO:0000305" key="4"/>
<evidence type="ECO:0000312" key="5">
    <source>
        <dbReference type="EMBL" id="CAI86290.1"/>
    </source>
</evidence>
<evidence type="ECO:0007829" key="6">
    <source>
        <dbReference type="PDB" id="3LIO"/>
    </source>
</evidence>
<dbReference type="EC" id="1.15.1.1"/>
<dbReference type="EMBL" id="CR954246">
    <property type="protein sequence ID" value="CAI86290.1"/>
    <property type="molecule type" value="Genomic_DNA"/>
</dbReference>
<dbReference type="PDB" id="3LIO">
    <property type="method" value="X-ray"/>
    <property type="resolution" value="1.50 A"/>
    <property type="chains" value="A/B=1-192"/>
</dbReference>
<dbReference type="PDB" id="3LJ9">
    <property type="method" value="X-ray"/>
    <property type="resolution" value="2.10 A"/>
    <property type="chains" value="A/B=1-192"/>
</dbReference>
<dbReference type="PDB" id="3LJF">
    <property type="method" value="X-ray"/>
    <property type="resolution" value="2.10 A"/>
    <property type="chains" value="A/B/C/D=1-192"/>
</dbReference>
<dbReference type="PDB" id="4L2A">
    <property type="method" value="X-ray"/>
    <property type="resolution" value="2.06 A"/>
    <property type="chains" value="A/B=1-192"/>
</dbReference>
<dbReference type="PDB" id="4L2B">
    <property type="method" value="X-ray"/>
    <property type="resolution" value="1.97 A"/>
    <property type="chains" value="A/B=1-192"/>
</dbReference>
<dbReference type="PDB" id="4L2C">
    <property type="method" value="X-ray"/>
    <property type="resolution" value="1.66 A"/>
    <property type="chains" value="A/B/C/D=1-192"/>
</dbReference>
<dbReference type="PDB" id="4L2D">
    <property type="method" value="X-ray"/>
    <property type="resolution" value="2.07 A"/>
    <property type="chains" value="A/B/C/D=1-192"/>
</dbReference>
<dbReference type="PDBsum" id="3LIO"/>
<dbReference type="PDBsum" id="3LJ9"/>
<dbReference type="PDBsum" id="3LJF"/>
<dbReference type="PDBsum" id="4L2A"/>
<dbReference type="PDBsum" id="4L2B"/>
<dbReference type="PDBsum" id="4L2C"/>
<dbReference type="PDBsum" id="4L2D"/>
<dbReference type="SMR" id="P84612"/>
<dbReference type="STRING" id="326442.PSHAa1215"/>
<dbReference type="KEGG" id="pha:PSHAa1215"/>
<dbReference type="eggNOG" id="COG0605">
    <property type="taxonomic scope" value="Bacteria"/>
</dbReference>
<dbReference type="HOGENOM" id="CLU_031625_0_0_6"/>
<dbReference type="BRENDA" id="1.15.1.1">
    <property type="organism ID" value="5081"/>
</dbReference>
<dbReference type="EvolutionaryTrace" id="P84612"/>
<dbReference type="Proteomes" id="UP000006843">
    <property type="component" value="Chromosome I"/>
</dbReference>
<dbReference type="GO" id="GO:0046872">
    <property type="term" value="F:metal ion binding"/>
    <property type="evidence" value="ECO:0007669"/>
    <property type="project" value="UniProtKB-KW"/>
</dbReference>
<dbReference type="GO" id="GO:0004784">
    <property type="term" value="F:superoxide dismutase activity"/>
    <property type="evidence" value="ECO:0007669"/>
    <property type="project" value="UniProtKB-EC"/>
</dbReference>
<dbReference type="FunFam" id="1.10.287.990:FF:000002">
    <property type="entry name" value="Superoxide dismutase"/>
    <property type="match status" value="1"/>
</dbReference>
<dbReference type="FunFam" id="3.55.40.20:FF:000001">
    <property type="entry name" value="Superoxide dismutase"/>
    <property type="match status" value="1"/>
</dbReference>
<dbReference type="Gene3D" id="1.10.287.990">
    <property type="entry name" value="Fe,Mn superoxide dismutase (SOD) domain"/>
    <property type="match status" value="1"/>
</dbReference>
<dbReference type="Gene3D" id="3.55.40.20">
    <property type="entry name" value="Iron/manganese superoxide dismutase, C-terminal domain"/>
    <property type="match status" value="1"/>
</dbReference>
<dbReference type="InterPro" id="IPR001189">
    <property type="entry name" value="Mn/Fe_SOD"/>
</dbReference>
<dbReference type="InterPro" id="IPR019833">
    <property type="entry name" value="Mn/Fe_SOD_BS"/>
</dbReference>
<dbReference type="InterPro" id="IPR019832">
    <property type="entry name" value="Mn/Fe_SOD_C"/>
</dbReference>
<dbReference type="InterPro" id="IPR019831">
    <property type="entry name" value="Mn/Fe_SOD_N"/>
</dbReference>
<dbReference type="InterPro" id="IPR036324">
    <property type="entry name" value="Mn/Fe_SOD_N_sf"/>
</dbReference>
<dbReference type="InterPro" id="IPR036314">
    <property type="entry name" value="SOD_C_sf"/>
</dbReference>
<dbReference type="PANTHER" id="PTHR42769">
    <property type="entry name" value="SUPEROXIDE DISMUTASE"/>
    <property type="match status" value="1"/>
</dbReference>
<dbReference type="PANTHER" id="PTHR42769:SF3">
    <property type="entry name" value="SUPEROXIDE DISMUTASE [FE] 2, CHLOROPLASTIC"/>
    <property type="match status" value="1"/>
</dbReference>
<dbReference type="Pfam" id="PF02777">
    <property type="entry name" value="Sod_Fe_C"/>
    <property type="match status" value="1"/>
</dbReference>
<dbReference type="Pfam" id="PF00081">
    <property type="entry name" value="Sod_Fe_N"/>
    <property type="match status" value="1"/>
</dbReference>
<dbReference type="PIRSF" id="PIRSF000349">
    <property type="entry name" value="SODismutase"/>
    <property type="match status" value="1"/>
</dbReference>
<dbReference type="PRINTS" id="PR01703">
    <property type="entry name" value="MNSODISMTASE"/>
</dbReference>
<dbReference type="SUPFAM" id="SSF54719">
    <property type="entry name" value="Fe,Mn superoxide dismutase (SOD), C-terminal domain"/>
    <property type="match status" value="1"/>
</dbReference>
<dbReference type="SUPFAM" id="SSF46609">
    <property type="entry name" value="Fe,Mn superoxide dismutase (SOD), N-terminal domain"/>
    <property type="match status" value="1"/>
</dbReference>
<dbReference type="PROSITE" id="PS00088">
    <property type="entry name" value="SOD_MN"/>
    <property type="match status" value="1"/>
</dbReference>
<keyword id="KW-0002">3D-structure</keyword>
<keyword id="KW-0903">Direct protein sequencing</keyword>
<keyword id="KW-0408">Iron</keyword>
<keyword id="KW-0479">Metal-binding</keyword>
<keyword id="KW-0560">Oxidoreductase</keyword>
<keyword id="KW-1185">Reference proteome</keyword>
<feature type="chain" id="PRO_0000159970" description="Superoxide dismutase [Fe]">
    <location>
        <begin position="1"/>
        <end position="192"/>
    </location>
</feature>
<feature type="binding site" evidence="1">
    <location>
        <position position="26"/>
    </location>
    <ligand>
        <name>Fe cation</name>
        <dbReference type="ChEBI" id="CHEBI:24875"/>
    </ligand>
</feature>
<feature type="binding site" evidence="1">
    <location>
        <position position="73"/>
    </location>
    <ligand>
        <name>Fe cation</name>
        <dbReference type="ChEBI" id="CHEBI:24875"/>
    </ligand>
</feature>
<feature type="binding site" evidence="1">
    <location>
        <position position="157"/>
    </location>
    <ligand>
        <name>Fe cation</name>
        <dbReference type="ChEBI" id="CHEBI:24875"/>
    </ligand>
</feature>
<feature type="binding site" evidence="1">
    <location>
        <position position="161"/>
    </location>
    <ligand>
        <name>Fe cation</name>
        <dbReference type="ChEBI" id="CHEBI:24875"/>
    </ligand>
</feature>
<feature type="turn" evidence="6">
    <location>
        <begin position="11"/>
        <end position="17"/>
    </location>
</feature>
<feature type="helix" evidence="6">
    <location>
        <begin position="20"/>
        <end position="26"/>
    </location>
</feature>
<feature type="turn" evidence="6">
    <location>
        <begin position="27"/>
        <end position="29"/>
    </location>
</feature>
<feature type="helix" evidence="6">
    <location>
        <begin position="30"/>
        <end position="41"/>
    </location>
</feature>
<feature type="turn" evidence="6">
    <location>
        <begin position="46"/>
        <end position="49"/>
    </location>
</feature>
<feature type="helix" evidence="6">
    <location>
        <begin position="52"/>
        <end position="56"/>
    </location>
</feature>
<feature type="helix" evidence="6">
    <location>
        <begin position="61"/>
        <end position="78"/>
    </location>
</feature>
<feature type="helix" evidence="6">
    <location>
        <begin position="90"/>
        <end position="100"/>
    </location>
</feature>
<feature type="helix" evidence="6">
    <location>
        <begin position="103"/>
        <end position="115"/>
    </location>
</feature>
<feature type="strand" evidence="6">
    <location>
        <begin position="119"/>
        <end position="127"/>
    </location>
</feature>
<feature type="strand" evidence="6">
    <location>
        <begin position="133"/>
        <end position="139"/>
    </location>
</feature>
<feature type="helix" evidence="6">
    <location>
        <begin position="144"/>
        <end position="146"/>
    </location>
</feature>
<feature type="strand" evidence="6">
    <location>
        <begin position="151"/>
        <end position="157"/>
    </location>
</feature>
<feature type="helix" evidence="6">
    <location>
        <begin position="160"/>
        <end position="162"/>
    </location>
</feature>
<feature type="helix" evidence="6">
    <location>
        <begin position="164"/>
        <end position="167"/>
    </location>
</feature>
<feature type="helix" evidence="6">
    <location>
        <begin position="171"/>
        <end position="181"/>
    </location>
</feature>
<feature type="helix" evidence="6">
    <location>
        <begin position="184"/>
        <end position="191"/>
    </location>
</feature>
<sequence>AFELPSLPYAIDALEPHISKETLEFHHGKHHNTYVVKLNGLIPGTKFENKSLEEIVCSSDGGVFNNAAQIWNHTFYWNSLSPNGGGAPTGAVADAINAKWGSFDAFKEALNDKAVNNFGSSWTWLVKLADGSLDIVNTSNAATPLTDDGVTPILTVDLWEHAYYIDYRNVRPDYLKGFWSLVNWEFANANFA</sequence>
<proteinExistence type="evidence at protein level"/>